<proteinExistence type="inferred from homology"/>
<protein>
    <recommendedName>
        <fullName evidence="1">Dihydroxy-acid dehydratase</fullName>
        <shortName evidence="1">DAD</shortName>
        <ecNumber evidence="1">4.2.1.9</ecNumber>
    </recommendedName>
</protein>
<gene>
    <name evidence="1" type="primary">ilvD</name>
    <name type="ordered locus">SPA3743</name>
</gene>
<organism>
    <name type="scientific">Salmonella paratyphi A (strain ATCC 9150 / SARB42)</name>
    <dbReference type="NCBI Taxonomy" id="295319"/>
    <lineage>
        <taxon>Bacteria</taxon>
        <taxon>Pseudomonadati</taxon>
        <taxon>Pseudomonadota</taxon>
        <taxon>Gammaproteobacteria</taxon>
        <taxon>Enterobacterales</taxon>
        <taxon>Enterobacteriaceae</taxon>
        <taxon>Salmonella</taxon>
    </lineage>
</organism>
<comment type="function">
    <text evidence="1">Functions in the biosynthesis of branched-chain amino acids. Catalyzes the dehydration of (2R,3R)-2,3-dihydroxy-3-methylpentanoate (2,3-dihydroxy-3-methylvalerate) into 2-oxo-3-methylpentanoate (2-oxo-3-methylvalerate) and of (2R)-2,3-dihydroxy-3-methylbutanoate (2,3-dihydroxyisovalerate) into 2-oxo-3-methylbutanoate (2-oxoisovalerate), the penultimate precursor to L-isoleucine and L-valine, respectively.</text>
</comment>
<comment type="catalytic activity">
    <reaction evidence="1">
        <text>(2R)-2,3-dihydroxy-3-methylbutanoate = 3-methyl-2-oxobutanoate + H2O</text>
        <dbReference type="Rhea" id="RHEA:24809"/>
        <dbReference type="ChEBI" id="CHEBI:11851"/>
        <dbReference type="ChEBI" id="CHEBI:15377"/>
        <dbReference type="ChEBI" id="CHEBI:49072"/>
        <dbReference type="EC" id="4.2.1.9"/>
    </reaction>
    <physiologicalReaction direction="left-to-right" evidence="1">
        <dbReference type="Rhea" id="RHEA:24810"/>
    </physiologicalReaction>
</comment>
<comment type="catalytic activity">
    <reaction evidence="1">
        <text>(2R,3R)-2,3-dihydroxy-3-methylpentanoate = (S)-3-methyl-2-oxopentanoate + H2O</text>
        <dbReference type="Rhea" id="RHEA:27694"/>
        <dbReference type="ChEBI" id="CHEBI:15377"/>
        <dbReference type="ChEBI" id="CHEBI:35146"/>
        <dbReference type="ChEBI" id="CHEBI:49258"/>
        <dbReference type="EC" id="4.2.1.9"/>
    </reaction>
    <physiologicalReaction direction="left-to-right" evidence="1">
        <dbReference type="Rhea" id="RHEA:27695"/>
    </physiologicalReaction>
</comment>
<comment type="cofactor">
    <cofactor evidence="1">
        <name>[2Fe-2S] cluster</name>
        <dbReference type="ChEBI" id="CHEBI:190135"/>
    </cofactor>
    <text evidence="1">Binds 1 [2Fe-2S] cluster per subunit. This cluster acts as a Lewis acid cofactor.</text>
</comment>
<comment type="cofactor">
    <cofactor evidence="1">
        <name>Mg(2+)</name>
        <dbReference type="ChEBI" id="CHEBI:18420"/>
    </cofactor>
</comment>
<comment type="pathway">
    <text evidence="1">Amino-acid biosynthesis; L-isoleucine biosynthesis; L-isoleucine from 2-oxobutanoate: step 3/4.</text>
</comment>
<comment type="pathway">
    <text evidence="1">Amino-acid biosynthesis; L-valine biosynthesis; L-valine from pyruvate: step 3/4.</text>
</comment>
<comment type="subunit">
    <text evidence="1">Homodimer.</text>
</comment>
<comment type="similarity">
    <text evidence="1">Belongs to the IlvD/Edd family.</text>
</comment>
<feature type="chain" id="PRO_0000225420" description="Dihydroxy-acid dehydratase">
    <location>
        <begin position="1"/>
        <end position="616"/>
    </location>
</feature>
<feature type="active site" description="Proton acceptor" evidence="1">
    <location>
        <position position="517"/>
    </location>
</feature>
<feature type="binding site" evidence="1">
    <location>
        <position position="81"/>
    </location>
    <ligand>
        <name>Mg(2+)</name>
        <dbReference type="ChEBI" id="CHEBI:18420"/>
    </ligand>
</feature>
<feature type="binding site" evidence="1">
    <location>
        <position position="122"/>
    </location>
    <ligand>
        <name>[2Fe-2S] cluster</name>
        <dbReference type="ChEBI" id="CHEBI:190135"/>
    </ligand>
</feature>
<feature type="binding site" evidence="1">
    <location>
        <position position="123"/>
    </location>
    <ligand>
        <name>Mg(2+)</name>
        <dbReference type="ChEBI" id="CHEBI:18420"/>
    </ligand>
</feature>
<feature type="binding site" description="via carbamate group" evidence="1">
    <location>
        <position position="124"/>
    </location>
    <ligand>
        <name>Mg(2+)</name>
        <dbReference type="ChEBI" id="CHEBI:18420"/>
    </ligand>
</feature>
<feature type="binding site" evidence="1">
    <location>
        <position position="195"/>
    </location>
    <ligand>
        <name>[2Fe-2S] cluster</name>
        <dbReference type="ChEBI" id="CHEBI:190135"/>
    </ligand>
</feature>
<feature type="binding site" evidence="1">
    <location>
        <position position="491"/>
    </location>
    <ligand>
        <name>Mg(2+)</name>
        <dbReference type="ChEBI" id="CHEBI:18420"/>
    </ligand>
</feature>
<feature type="modified residue" description="N6-carboxylysine" evidence="1">
    <location>
        <position position="124"/>
    </location>
</feature>
<keyword id="KW-0001">2Fe-2S</keyword>
<keyword id="KW-0028">Amino-acid biosynthesis</keyword>
<keyword id="KW-0100">Branched-chain amino acid biosynthesis</keyword>
<keyword id="KW-0408">Iron</keyword>
<keyword id="KW-0411">Iron-sulfur</keyword>
<keyword id="KW-0456">Lyase</keyword>
<keyword id="KW-0460">Magnesium</keyword>
<keyword id="KW-0479">Metal-binding</keyword>
<sequence length="616" mass="65730">MPKYRSATTTHGRNMAGARALWRATGMTDSDFGKPIIAVVNSFTQFVPGHVHLRDLGKLVAEQIEASGGVAKEFNTIAVDDGIAMGHGGMLYSLPSRELIADSVEYMVNAHCADAMVCISNCDKITPGMLMASLRLNIPVIFVSGGPMEAGKTKLSDQIIKLDLVDAMIQGADPKVSDDQSNQVERSACPTCGSCSGMFTANSMNCLTEALGLSQPGNGSLLATHADRKQLFLNAGKRIVELTKRYYEQDDESALPRNIANKAAFENAMTLDIAMGGSTNTVLHLLAAAQEAEIDFTMSDIDKLSRKVPQLCKVAPSTQKYHMEDVHRAGGVLGILGELDRAGLLNRNVKNVLGLTLPQTLEQYDITVTQDEAVKKMFRAGPAGIRTTQAFSQDCRWDSLDDDRAAGCIRSLEYAYSKDGGLAVLYGNFAENGCIVKTAGVDDSILKFTGPAKVYESQDDAVEAILGGKVVEGDVVVIRYEGPKGGPGMQEMLYPTSFLKSMGLGKACALITDGRFSGGTSGLSIGHVSPEAASGGTIALIEDGDTIAIDIPNRSIQLQLSEAEIAARREAQEARGDKAWTPKNRQRQVSFALRAYASLATSADKGAVRDKSKLGG</sequence>
<name>ILVD_SALPA</name>
<dbReference type="EC" id="4.2.1.9" evidence="1"/>
<dbReference type="EMBL" id="CP000026">
    <property type="protein sequence ID" value="AAV79526.1"/>
    <property type="molecule type" value="Genomic_DNA"/>
</dbReference>
<dbReference type="RefSeq" id="WP_001127439.1">
    <property type="nucleotide sequence ID" value="NC_006511.1"/>
</dbReference>
<dbReference type="SMR" id="Q5PK00"/>
<dbReference type="KEGG" id="spt:SPA3743"/>
<dbReference type="HOGENOM" id="CLU_014271_4_2_6"/>
<dbReference type="UniPathway" id="UPA00047">
    <property type="reaction ID" value="UER00057"/>
</dbReference>
<dbReference type="UniPathway" id="UPA00049">
    <property type="reaction ID" value="UER00061"/>
</dbReference>
<dbReference type="Proteomes" id="UP000008185">
    <property type="component" value="Chromosome"/>
</dbReference>
<dbReference type="GO" id="GO:0005829">
    <property type="term" value="C:cytosol"/>
    <property type="evidence" value="ECO:0007669"/>
    <property type="project" value="TreeGrafter"/>
</dbReference>
<dbReference type="GO" id="GO:0051537">
    <property type="term" value="F:2 iron, 2 sulfur cluster binding"/>
    <property type="evidence" value="ECO:0007669"/>
    <property type="project" value="UniProtKB-UniRule"/>
</dbReference>
<dbReference type="GO" id="GO:0004160">
    <property type="term" value="F:dihydroxy-acid dehydratase activity"/>
    <property type="evidence" value="ECO:0007669"/>
    <property type="project" value="UniProtKB-UniRule"/>
</dbReference>
<dbReference type="GO" id="GO:0000287">
    <property type="term" value="F:magnesium ion binding"/>
    <property type="evidence" value="ECO:0007669"/>
    <property type="project" value="UniProtKB-UniRule"/>
</dbReference>
<dbReference type="GO" id="GO:0009097">
    <property type="term" value="P:isoleucine biosynthetic process"/>
    <property type="evidence" value="ECO:0007669"/>
    <property type="project" value="UniProtKB-UniRule"/>
</dbReference>
<dbReference type="GO" id="GO:0009099">
    <property type="term" value="P:L-valine biosynthetic process"/>
    <property type="evidence" value="ECO:0007669"/>
    <property type="project" value="UniProtKB-UniRule"/>
</dbReference>
<dbReference type="FunFam" id="3.50.30.80:FF:000001">
    <property type="entry name" value="Dihydroxy-acid dehydratase"/>
    <property type="match status" value="1"/>
</dbReference>
<dbReference type="Gene3D" id="3.50.30.80">
    <property type="entry name" value="IlvD/EDD C-terminal domain-like"/>
    <property type="match status" value="1"/>
</dbReference>
<dbReference type="HAMAP" id="MF_00012">
    <property type="entry name" value="IlvD"/>
    <property type="match status" value="1"/>
</dbReference>
<dbReference type="InterPro" id="IPR042096">
    <property type="entry name" value="Dihydro-acid_dehy_C"/>
</dbReference>
<dbReference type="InterPro" id="IPR004404">
    <property type="entry name" value="DihydroxyA_deHydtase"/>
</dbReference>
<dbReference type="InterPro" id="IPR020558">
    <property type="entry name" value="DiOHA_6PGluconate_deHydtase_CS"/>
</dbReference>
<dbReference type="InterPro" id="IPR056740">
    <property type="entry name" value="ILV_EDD_C"/>
</dbReference>
<dbReference type="InterPro" id="IPR000581">
    <property type="entry name" value="ILV_EDD_N"/>
</dbReference>
<dbReference type="InterPro" id="IPR037237">
    <property type="entry name" value="IlvD/EDD_N"/>
</dbReference>
<dbReference type="NCBIfam" id="TIGR00110">
    <property type="entry name" value="ilvD"/>
    <property type="match status" value="1"/>
</dbReference>
<dbReference type="NCBIfam" id="NF009103">
    <property type="entry name" value="PRK12448.1"/>
    <property type="match status" value="1"/>
</dbReference>
<dbReference type="PANTHER" id="PTHR43661">
    <property type="entry name" value="D-XYLONATE DEHYDRATASE"/>
    <property type="match status" value="1"/>
</dbReference>
<dbReference type="PANTHER" id="PTHR43661:SF3">
    <property type="entry name" value="D-XYLONATE DEHYDRATASE YAGF-RELATED"/>
    <property type="match status" value="1"/>
</dbReference>
<dbReference type="Pfam" id="PF24877">
    <property type="entry name" value="ILV_EDD_C"/>
    <property type="match status" value="1"/>
</dbReference>
<dbReference type="Pfam" id="PF00920">
    <property type="entry name" value="ILVD_EDD_N"/>
    <property type="match status" value="1"/>
</dbReference>
<dbReference type="SUPFAM" id="SSF143975">
    <property type="entry name" value="IlvD/EDD N-terminal domain-like"/>
    <property type="match status" value="1"/>
</dbReference>
<dbReference type="SUPFAM" id="SSF52016">
    <property type="entry name" value="LeuD/IlvD-like"/>
    <property type="match status" value="1"/>
</dbReference>
<dbReference type="PROSITE" id="PS00886">
    <property type="entry name" value="ILVD_EDD_1"/>
    <property type="match status" value="1"/>
</dbReference>
<dbReference type="PROSITE" id="PS00887">
    <property type="entry name" value="ILVD_EDD_2"/>
    <property type="match status" value="1"/>
</dbReference>
<accession>Q5PK00</accession>
<evidence type="ECO:0000255" key="1">
    <source>
        <dbReference type="HAMAP-Rule" id="MF_00012"/>
    </source>
</evidence>
<reference key="1">
    <citation type="journal article" date="2004" name="Nat. Genet.">
        <title>Comparison of genome degradation in Paratyphi A and Typhi, human-restricted serovars of Salmonella enterica that cause typhoid.</title>
        <authorList>
            <person name="McClelland M."/>
            <person name="Sanderson K.E."/>
            <person name="Clifton S.W."/>
            <person name="Latreille P."/>
            <person name="Porwollik S."/>
            <person name="Sabo A."/>
            <person name="Meyer R."/>
            <person name="Bieri T."/>
            <person name="Ozersky P."/>
            <person name="McLellan M."/>
            <person name="Harkins C.R."/>
            <person name="Wang C."/>
            <person name="Nguyen C."/>
            <person name="Berghoff A."/>
            <person name="Elliott G."/>
            <person name="Kohlberg S."/>
            <person name="Strong C."/>
            <person name="Du F."/>
            <person name="Carter J."/>
            <person name="Kremizki C."/>
            <person name="Layman D."/>
            <person name="Leonard S."/>
            <person name="Sun H."/>
            <person name="Fulton L."/>
            <person name="Nash W."/>
            <person name="Miner T."/>
            <person name="Minx P."/>
            <person name="Delehaunty K."/>
            <person name="Fronick C."/>
            <person name="Magrini V."/>
            <person name="Nhan M."/>
            <person name="Warren W."/>
            <person name="Florea L."/>
            <person name="Spieth J."/>
            <person name="Wilson R.K."/>
        </authorList>
    </citation>
    <scope>NUCLEOTIDE SEQUENCE [LARGE SCALE GENOMIC DNA]</scope>
    <source>
        <strain>ATCC 9150 / SARB42</strain>
    </source>
</reference>